<accession>Q11QC6</accession>
<organism>
    <name type="scientific">Cytophaga hutchinsonii (strain ATCC 33406 / DSM 1761 / CIP 103989 / NBRC 15051 / NCIMB 9469 / D465)</name>
    <dbReference type="NCBI Taxonomy" id="269798"/>
    <lineage>
        <taxon>Bacteria</taxon>
        <taxon>Pseudomonadati</taxon>
        <taxon>Bacteroidota</taxon>
        <taxon>Cytophagia</taxon>
        <taxon>Cytophagales</taxon>
        <taxon>Cytophagaceae</taxon>
        <taxon>Cytophaga</taxon>
    </lineage>
</organism>
<sequence length="130" mass="14492">MDPIADYLTKIRNAIKAKHRVVEVPASNIKKEITKVLFDKGYIQSYKFEESAVQGSIKIALKYHPLTKESAIVKIERISKPGLRKYTHAETMPRVLNGLGVAIVSTSKGIMSDKEAKNLNIGGEVLCFVY</sequence>
<proteinExistence type="inferred from homology"/>
<protein>
    <recommendedName>
        <fullName evidence="1">Small ribosomal subunit protein uS8</fullName>
    </recommendedName>
    <alternativeName>
        <fullName evidence="2">30S ribosomal protein S8</fullName>
    </alternativeName>
</protein>
<feature type="chain" id="PRO_0000290826" description="Small ribosomal subunit protein uS8">
    <location>
        <begin position="1"/>
        <end position="130"/>
    </location>
</feature>
<reference key="1">
    <citation type="journal article" date="2007" name="Appl. Environ. Microbiol.">
        <title>Genome sequence of the cellulolytic gliding bacterium Cytophaga hutchinsonii.</title>
        <authorList>
            <person name="Xie G."/>
            <person name="Bruce D.C."/>
            <person name="Challacombe J.F."/>
            <person name="Chertkov O."/>
            <person name="Detter J.C."/>
            <person name="Gilna P."/>
            <person name="Han C.S."/>
            <person name="Lucas S."/>
            <person name="Misra M."/>
            <person name="Myers G.L."/>
            <person name="Richardson P."/>
            <person name="Tapia R."/>
            <person name="Thayer N."/>
            <person name="Thompson L.S."/>
            <person name="Brettin T.S."/>
            <person name="Henrissat B."/>
            <person name="Wilson D.B."/>
            <person name="McBride M.J."/>
        </authorList>
    </citation>
    <scope>NUCLEOTIDE SEQUENCE [LARGE SCALE GENOMIC DNA]</scope>
    <source>
        <strain>ATCC 33406 / DSM 1761 / JCM 20678 / CIP 103989 / IAM 12607 / NBRC 15051 / NCIMB 9469 / D465</strain>
    </source>
</reference>
<dbReference type="EMBL" id="CP000383">
    <property type="protein sequence ID" value="ABG60388.1"/>
    <property type="molecule type" value="Genomic_DNA"/>
</dbReference>
<dbReference type="RefSeq" id="WP_011586497.1">
    <property type="nucleotide sequence ID" value="NC_008255.1"/>
</dbReference>
<dbReference type="SMR" id="Q11QC6"/>
<dbReference type="STRING" id="269798.CHU_3148"/>
<dbReference type="KEGG" id="chu:CHU_3148"/>
<dbReference type="eggNOG" id="COG0096">
    <property type="taxonomic scope" value="Bacteria"/>
</dbReference>
<dbReference type="HOGENOM" id="CLU_098428_0_2_10"/>
<dbReference type="OrthoDB" id="9802617at2"/>
<dbReference type="Proteomes" id="UP000001822">
    <property type="component" value="Chromosome"/>
</dbReference>
<dbReference type="GO" id="GO:1990904">
    <property type="term" value="C:ribonucleoprotein complex"/>
    <property type="evidence" value="ECO:0007669"/>
    <property type="project" value="UniProtKB-KW"/>
</dbReference>
<dbReference type="GO" id="GO:0005840">
    <property type="term" value="C:ribosome"/>
    <property type="evidence" value="ECO:0007669"/>
    <property type="project" value="UniProtKB-KW"/>
</dbReference>
<dbReference type="GO" id="GO:0019843">
    <property type="term" value="F:rRNA binding"/>
    <property type="evidence" value="ECO:0007669"/>
    <property type="project" value="UniProtKB-UniRule"/>
</dbReference>
<dbReference type="GO" id="GO:0003735">
    <property type="term" value="F:structural constituent of ribosome"/>
    <property type="evidence" value="ECO:0007669"/>
    <property type="project" value="InterPro"/>
</dbReference>
<dbReference type="GO" id="GO:0006412">
    <property type="term" value="P:translation"/>
    <property type="evidence" value="ECO:0007669"/>
    <property type="project" value="UniProtKB-UniRule"/>
</dbReference>
<dbReference type="FunFam" id="3.30.1370.30:FF:000002">
    <property type="entry name" value="30S ribosomal protein S8"/>
    <property type="match status" value="1"/>
</dbReference>
<dbReference type="FunFam" id="3.30.1490.10:FF:000001">
    <property type="entry name" value="30S ribosomal protein S8"/>
    <property type="match status" value="1"/>
</dbReference>
<dbReference type="Gene3D" id="3.30.1370.30">
    <property type="match status" value="1"/>
</dbReference>
<dbReference type="Gene3D" id="3.30.1490.10">
    <property type="match status" value="1"/>
</dbReference>
<dbReference type="HAMAP" id="MF_01302_B">
    <property type="entry name" value="Ribosomal_uS8_B"/>
    <property type="match status" value="1"/>
</dbReference>
<dbReference type="InterPro" id="IPR000630">
    <property type="entry name" value="Ribosomal_uS8"/>
</dbReference>
<dbReference type="InterPro" id="IPR047863">
    <property type="entry name" value="Ribosomal_uS8_CS"/>
</dbReference>
<dbReference type="InterPro" id="IPR035987">
    <property type="entry name" value="Ribosomal_uS8_sf"/>
</dbReference>
<dbReference type="NCBIfam" id="NF001109">
    <property type="entry name" value="PRK00136.1"/>
    <property type="match status" value="1"/>
</dbReference>
<dbReference type="PANTHER" id="PTHR11758">
    <property type="entry name" value="40S RIBOSOMAL PROTEIN S15A"/>
    <property type="match status" value="1"/>
</dbReference>
<dbReference type="Pfam" id="PF00410">
    <property type="entry name" value="Ribosomal_S8"/>
    <property type="match status" value="1"/>
</dbReference>
<dbReference type="SUPFAM" id="SSF56047">
    <property type="entry name" value="Ribosomal protein S8"/>
    <property type="match status" value="1"/>
</dbReference>
<dbReference type="PROSITE" id="PS00053">
    <property type="entry name" value="RIBOSOMAL_S8"/>
    <property type="match status" value="1"/>
</dbReference>
<evidence type="ECO:0000255" key="1">
    <source>
        <dbReference type="HAMAP-Rule" id="MF_01302"/>
    </source>
</evidence>
<evidence type="ECO:0000305" key="2"/>
<gene>
    <name evidence="1" type="primary">rpsH</name>
    <name type="ordered locus">CHU_3148</name>
</gene>
<name>RS8_CYTH3</name>
<keyword id="KW-1185">Reference proteome</keyword>
<keyword id="KW-0687">Ribonucleoprotein</keyword>
<keyword id="KW-0689">Ribosomal protein</keyword>
<keyword id="KW-0694">RNA-binding</keyword>
<keyword id="KW-0699">rRNA-binding</keyword>
<comment type="function">
    <text evidence="1">One of the primary rRNA binding proteins, it binds directly to 16S rRNA central domain where it helps coordinate assembly of the platform of the 30S subunit.</text>
</comment>
<comment type="subunit">
    <text evidence="1">Part of the 30S ribosomal subunit. Contacts proteins S5 and S12.</text>
</comment>
<comment type="similarity">
    <text evidence="1">Belongs to the universal ribosomal protein uS8 family.</text>
</comment>